<sequence>MKNMIALTGIGYDIHRFAEVPRPLMLGGVHIPSSRGLDGHSDADVLCHAIADALLGAAGLPDIGYWFPPGDPSCKDIPSLDIVAKAVSLIRERGGRIVNVDSSLIAESPRISPYLEQMKGALGAALGISPVRVGIKATTNEQLGALGRREGIAAFAVAAILMPEDLTMP</sequence>
<dbReference type="EC" id="4.6.1.12" evidence="1"/>
<dbReference type="EMBL" id="CP001071">
    <property type="protein sequence ID" value="ACD05068.1"/>
    <property type="molecule type" value="Genomic_DNA"/>
</dbReference>
<dbReference type="SMR" id="B2URI3"/>
<dbReference type="STRING" id="349741.Amuc_1243"/>
<dbReference type="PaxDb" id="349741-Amuc_1243"/>
<dbReference type="KEGG" id="amu:Amuc_1243"/>
<dbReference type="eggNOG" id="COG0245">
    <property type="taxonomic scope" value="Bacteria"/>
</dbReference>
<dbReference type="HOGENOM" id="CLU_084630_2_0_0"/>
<dbReference type="OrthoDB" id="9804336at2"/>
<dbReference type="BioCyc" id="AMUC349741:G1GBX-1327-MONOMER"/>
<dbReference type="UniPathway" id="UPA00056">
    <property type="reaction ID" value="UER00095"/>
</dbReference>
<dbReference type="Proteomes" id="UP000001031">
    <property type="component" value="Chromosome"/>
</dbReference>
<dbReference type="GO" id="GO:0008685">
    <property type="term" value="F:2-C-methyl-D-erythritol 2,4-cyclodiphosphate synthase activity"/>
    <property type="evidence" value="ECO:0007669"/>
    <property type="project" value="UniProtKB-UniRule"/>
</dbReference>
<dbReference type="GO" id="GO:0046872">
    <property type="term" value="F:metal ion binding"/>
    <property type="evidence" value="ECO:0007669"/>
    <property type="project" value="UniProtKB-KW"/>
</dbReference>
<dbReference type="GO" id="GO:0019288">
    <property type="term" value="P:isopentenyl diphosphate biosynthetic process, methylerythritol 4-phosphate pathway"/>
    <property type="evidence" value="ECO:0007669"/>
    <property type="project" value="UniProtKB-UniRule"/>
</dbReference>
<dbReference type="GO" id="GO:0016114">
    <property type="term" value="P:terpenoid biosynthetic process"/>
    <property type="evidence" value="ECO:0007669"/>
    <property type="project" value="InterPro"/>
</dbReference>
<dbReference type="CDD" id="cd00554">
    <property type="entry name" value="MECDP_synthase"/>
    <property type="match status" value="1"/>
</dbReference>
<dbReference type="Gene3D" id="3.30.1330.50">
    <property type="entry name" value="2-C-methyl-D-erythritol 2,4-cyclodiphosphate synthase"/>
    <property type="match status" value="1"/>
</dbReference>
<dbReference type="HAMAP" id="MF_00107">
    <property type="entry name" value="IspF"/>
    <property type="match status" value="1"/>
</dbReference>
<dbReference type="InterPro" id="IPR003526">
    <property type="entry name" value="MECDP_synthase"/>
</dbReference>
<dbReference type="InterPro" id="IPR020555">
    <property type="entry name" value="MECDP_synthase_CS"/>
</dbReference>
<dbReference type="InterPro" id="IPR036571">
    <property type="entry name" value="MECDP_synthase_sf"/>
</dbReference>
<dbReference type="NCBIfam" id="TIGR00151">
    <property type="entry name" value="ispF"/>
    <property type="match status" value="1"/>
</dbReference>
<dbReference type="PANTHER" id="PTHR43181">
    <property type="entry name" value="2-C-METHYL-D-ERYTHRITOL 2,4-CYCLODIPHOSPHATE SYNTHASE, CHLOROPLASTIC"/>
    <property type="match status" value="1"/>
</dbReference>
<dbReference type="PANTHER" id="PTHR43181:SF1">
    <property type="entry name" value="2-C-METHYL-D-ERYTHRITOL 2,4-CYCLODIPHOSPHATE SYNTHASE, CHLOROPLASTIC"/>
    <property type="match status" value="1"/>
</dbReference>
<dbReference type="Pfam" id="PF02542">
    <property type="entry name" value="YgbB"/>
    <property type="match status" value="1"/>
</dbReference>
<dbReference type="SUPFAM" id="SSF69765">
    <property type="entry name" value="IpsF-like"/>
    <property type="match status" value="1"/>
</dbReference>
<dbReference type="PROSITE" id="PS01350">
    <property type="entry name" value="ISPF"/>
    <property type="match status" value="1"/>
</dbReference>
<feature type="chain" id="PRO_1000118988" description="2-C-methyl-D-erythritol 2,4-cyclodiphosphate synthase">
    <location>
        <begin position="1"/>
        <end position="169"/>
    </location>
</feature>
<feature type="binding site" evidence="1">
    <location>
        <begin position="13"/>
        <end position="15"/>
    </location>
    <ligand>
        <name>4-CDP-2-C-methyl-D-erythritol 2-phosphate</name>
        <dbReference type="ChEBI" id="CHEBI:57919"/>
    </ligand>
</feature>
<feature type="binding site" evidence="1">
    <location>
        <position position="13"/>
    </location>
    <ligand>
        <name>a divalent metal cation</name>
        <dbReference type="ChEBI" id="CHEBI:60240"/>
    </ligand>
</feature>
<feature type="binding site" evidence="1">
    <location>
        <position position="15"/>
    </location>
    <ligand>
        <name>a divalent metal cation</name>
        <dbReference type="ChEBI" id="CHEBI:60240"/>
    </ligand>
</feature>
<feature type="binding site" evidence="1">
    <location>
        <begin position="40"/>
        <end position="41"/>
    </location>
    <ligand>
        <name>4-CDP-2-C-methyl-D-erythritol 2-phosphate</name>
        <dbReference type="ChEBI" id="CHEBI:57919"/>
    </ligand>
</feature>
<feature type="binding site" evidence="1">
    <location>
        <position position="48"/>
    </location>
    <ligand>
        <name>a divalent metal cation</name>
        <dbReference type="ChEBI" id="CHEBI:60240"/>
    </ligand>
</feature>
<feature type="binding site" evidence="1">
    <location>
        <begin position="62"/>
        <end position="64"/>
    </location>
    <ligand>
        <name>4-CDP-2-C-methyl-D-erythritol 2-phosphate</name>
        <dbReference type="ChEBI" id="CHEBI:57919"/>
    </ligand>
</feature>
<feature type="binding site" evidence="1">
    <location>
        <begin position="138"/>
        <end position="141"/>
    </location>
    <ligand>
        <name>4-CDP-2-C-methyl-D-erythritol 2-phosphate</name>
        <dbReference type="ChEBI" id="CHEBI:57919"/>
    </ligand>
</feature>
<feature type="binding site" evidence="1">
    <location>
        <position position="148"/>
    </location>
    <ligand>
        <name>4-CDP-2-C-methyl-D-erythritol 2-phosphate</name>
        <dbReference type="ChEBI" id="CHEBI:57919"/>
    </ligand>
</feature>
<feature type="site" description="Transition state stabilizer" evidence="1">
    <location>
        <position position="40"/>
    </location>
</feature>
<feature type="site" description="Transition state stabilizer" evidence="1">
    <location>
        <position position="139"/>
    </location>
</feature>
<accession>B2URI3</accession>
<comment type="function">
    <text evidence="1">Involved in the biosynthesis of isopentenyl diphosphate (IPP) and dimethylallyl diphosphate (DMAPP), two major building blocks of isoprenoid compounds. Catalyzes the conversion of 4-diphosphocytidyl-2-C-methyl-D-erythritol 2-phosphate (CDP-ME2P) to 2-C-methyl-D-erythritol 2,4-cyclodiphosphate (ME-CPP) with a corresponding release of cytidine 5-monophosphate (CMP).</text>
</comment>
<comment type="catalytic activity">
    <reaction evidence="1">
        <text>4-CDP-2-C-methyl-D-erythritol 2-phosphate = 2-C-methyl-D-erythritol 2,4-cyclic diphosphate + CMP</text>
        <dbReference type="Rhea" id="RHEA:23864"/>
        <dbReference type="ChEBI" id="CHEBI:57919"/>
        <dbReference type="ChEBI" id="CHEBI:58483"/>
        <dbReference type="ChEBI" id="CHEBI:60377"/>
        <dbReference type="EC" id="4.6.1.12"/>
    </reaction>
</comment>
<comment type="cofactor">
    <cofactor evidence="1">
        <name>a divalent metal cation</name>
        <dbReference type="ChEBI" id="CHEBI:60240"/>
    </cofactor>
    <text evidence="1">Binds 1 divalent metal cation per subunit.</text>
</comment>
<comment type="pathway">
    <text evidence="1">Isoprenoid biosynthesis; isopentenyl diphosphate biosynthesis via DXP pathway; isopentenyl diphosphate from 1-deoxy-D-xylulose 5-phosphate: step 4/6.</text>
</comment>
<comment type="subunit">
    <text evidence="1">Homotrimer.</text>
</comment>
<comment type="similarity">
    <text evidence="1">Belongs to the IspF family.</text>
</comment>
<organism>
    <name type="scientific">Akkermansia muciniphila (strain ATCC BAA-835 / DSM 22959 / JCM 33894 / BCRC 81048 / CCUG 64013 / CIP 107961 / Muc)</name>
    <dbReference type="NCBI Taxonomy" id="349741"/>
    <lineage>
        <taxon>Bacteria</taxon>
        <taxon>Pseudomonadati</taxon>
        <taxon>Verrucomicrobiota</taxon>
        <taxon>Verrucomicrobiia</taxon>
        <taxon>Verrucomicrobiales</taxon>
        <taxon>Akkermansiaceae</taxon>
        <taxon>Akkermansia</taxon>
    </lineage>
</organism>
<evidence type="ECO:0000255" key="1">
    <source>
        <dbReference type="HAMAP-Rule" id="MF_00107"/>
    </source>
</evidence>
<gene>
    <name evidence="1" type="primary">ispF</name>
    <name type="ordered locus">Amuc_1243</name>
</gene>
<name>ISPF_AKKM8</name>
<proteinExistence type="inferred from homology"/>
<reference key="1">
    <citation type="journal article" date="2011" name="PLoS ONE">
        <title>The genome of Akkermansia muciniphila, a dedicated intestinal mucin degrader, and its use in exploring intestinal metagenomes.</title>
        <authorList>
            <person name="van Passel M.W."/>
            <person name="Kant R."/>
            <person name="Zoetendal E.G."/>
            <person name="Plugge C.M."/>
            <person name="Derrien M."/>
            <person name="Malfatti S.A."/>
            <person name="Chain P.S."/>
            <person name="Woyke T."/>
            <person name="Palva A."/>
            <person name="de Vos W.M."/>
            <person name="Smidt H."/>
        </authorList>
    </citation>
    <scope>NUCLEOTIDE SEQUENCE [LARGE SCALE GENOMIC DNA]</scope>
    <source>
        <strain>ATCC BAA-835 / DSM 22959 / JCM 33894 / BCRC 81048 / CCUG 64013 / CIP 107961 / Muc</strain>
    </source>
</reference>
<keyword id="KW-0414">Isoprene biosynthesis</keyword>
<keyword id="KW-0456">Lyase</keyword>
<keyword id="KW-0479">Metal-binding</keyword>
<keyword id="KW-1185">Reference proteome</keyword>
<protein>
    <recommendedName>
        <fullName evidence="1">2-C-methyl-D-erythritol 2,4-cyclodiphosphate synthase</fullName>
        <shortName evidence="1">MECDP-synthase</shortName>
        <shortName evidence="1">MECPP-synthase</shortName>
        <shortName evidence="1">MECPS</shortName>
        <ecNumber evidence="1">4.6.1.12</ecNumber>
    </recommendedName>
</protein>